<name>RLP7_DEBHA</name>
<accession>Q6BIF5</accession>
<reference key="1">
    <citation type="journal article" date="2004" name="Nature">
        <title>Genome evolution in yeasts.</title>
        <authorList>
            <person name="Dujon B."/>
            <person name="Sherman D."/>
            <person name="Fischer G."/>
            <person name="Durrens P."/>
            <person name="Casaregola S."/>
            <person name="Lafontaine I."/>
            <person name="de Montigny J."/>
            <person name="Marck C."/>
            <person name="Neuveglise C."/>
            <person name="Talla E."/>
            <person name="Goffard N."/>
            <person name="Frangeul L."/>
            <person name="Aigle M."/>
            <person name="Anthouard V."/>
            <person name="Babour A."/>
            <person name="Barbe V."/>
            <person name="Barnay S."/>
            <person name="Blanchin S."/>
            <person name="Beckerich J.-M."/>
            <person name="Beyne E."/>
            <person name="Bleykasten C."/>
            <person name="Boisrame A."/>
            <person name="Boyer J."/>
            <person name="Cattolico L."/>
            <person name="Confanioleri F."/>
            <person name="de Daruvar A."/>
            <person name="Despons L."/>
            <person name="Fabre E."/>
            <person name="Fairhead C."/>
            <person name="Ferry-Dumazet H."/>
            <person name="Groppi A."/>
            <person name="Hantraye F."/>
            <person name="Hennequin C."/>
            <person name="Jauniaux N."/>
            <person name="Joyet P."/>
            <person name="Kachouri R."/>
            <person name="Kerrest A."/>
            <person name="Koszul R."/>
            <person name="Lemaire M."/>
            <person name="Lesur I."/>
            <person name="Ma L."/>
            <person name="Muller H."/>
            <person name="Nicaud J.-M."/>
            <person name="Nikolski M."/>
            <person name="Oztas S."/>
            <person name="Ozier-Kalogeropoulos O."/>
            <person name="Pellenz S."/>
            <person name="Potier S."/>
            <person name="Richard G.-F."/>
            <person name="Straub M.-L."/>
            <person name="Suleau A."/>
            <person name="Swennen D."/>
            <person name="Tekaia F."/>
            <person name="Wesolowski-Louvel M."/>
            <person name="Westhof E."/>
            <person name="Wirth B."/>
            <person name="Zeniou-Meyer M."/>
            <person name="Zivanovic Y."/>
            <person name="Bolotin-Fukuhara M."/>
            <person name="Thierry A."/>
            <person name="Bouchier C."/>
            <person name="Caudron B."/>
            <person name="Scarpelli C."/>
            <person name="Gaillardin C."/>
            <person name="Weissenbach J."/>
            <person name="Wincker P."/>
            <person name="Souciet J.-L."/>
        </authorList>
    </citation>
    <scope>NUCLEOTIDE SEQUENCE [LARGE SCALE GENOMIC DNA]</scope>
    <source>
        <strain>ATCC 36239 / CBS 767 / BCRC 21394 / JCM 1990 / NBRC 0083 / IGC 2968</strain>
    </source>
</reference>
<evidence type="ECO:0000250" key="1"/>
<evidence type="ECO:0000256" key="2">
    <source>
        <dbReference type="SAM" id="MobiDB-lite"/>
    </source>
</evidence>
<evidence type="ECO:0000305" key="3"/>
<organism>
    <name type="scientific">Debaryomyces hansenii (strain ATCC 36239 / CBS 767 / BCRC 21394 / JCM 1990 / NBRC 0083 / IGC 2968)</name>
    <name type="common">Yeast</name>
    <name type="synonym">Torulaspora hansenii</name>
    <dbReference type="NCBI Taxonomy" id="284592"/>
    <lineage>
        <taxon>Eukaryota</taxon>
        <taxon>Fungi</taxon>
        <taxon>Dikarya</taxon>
        <taxon>Ascomycota</taxon>
        <taxon>Saccharomycotina</taxon>
        <taxon>Pichiomycetes</taxon>
        <taxon>Debaryomycetaceae</taxon>
        <taxon>Debaryomyces</taxon>
    </lineage>
</organism>
<feature type="chain" id="PRO_0000104655" description="Ribosome biogenesis protein RLP7">
    <location>
        <begin position="1"/>
        <end position="275"/>
    </location>
</feature>
<feature type="region of interest" description="Disordered" evidence="2">
    <location>
        <begin position="14"/>
        <end position="45"/>
    </location>
</feature>
<feature type="compositionally biased region" description="Basic and acidic residues" evidence="2">
    <location>
        <begin position="20"/>
        <end position="44"/>
    </location>
</feature>
<comment type="function">
    <text evidence="1">Involved in the biogenesis of the 60S ribosomal subunit. May act as a specificity factor that binds precursor rRNAs and tethers the enzymes that carry out the early 5' to 3' exonucleolytic reactions that generate the mature rRNAs (By similarity).</text>
</comment>
<comment type="subcellular location">
    <subcellularLocation>
        <location evidence="1">Nucleus</location>
        <location evidence="1">Nucleolus</location>
    </subcellularLocation>
</comment>
<comment type="similarity">
    <text evidence="3">Belongs to the universal ribosomal protein uL30 family.</text>
</comment>
<gene>
    <name type="primary">RLP7</name>
    <name type="ordered locus">DEHA2G10890g</name>
</gene>
<keyword id="KW-0539">Nucleus</keyword>
<keyword id="KW-1185">Reference proteome</keyword>
<keyword id="KW-0690">Ribosome biogenesis</keyword>
<keyword id="KW-0694">RNA-binding</keyword>
<proteinExistence type="inferred from homology"/>
<protein>
    <recommendedName>
        <fullName>Ribosome biogenesis protein RLP7</fullName>
    </recommendedName>
</protein>
<dbReference type="EMBL" id="CR382139">
    <property type="protein sequence ID" value="CAG90497.2"/>
    <property type="molecule type" value="Genomic_DNA"/>
</dbReference>
<dbReference type="RefSeq" id="XP_462016.2">
    <property type="nucleotide sequence ID" value="XM_462016.1"/>
</dbReference>
<dbReference type="SMR" id="Q6BIF5"/>
<dbReference type="FunCoup" id="Q6BIF5">
    <property type="interactions" value="397"/>
</dbReference>
<dbReference type="STRING" id="284592.Q6BIF5"/>
<dbReference type="GeneID" id="2904920"/>
<dbReference type="KEGG" id="dha:DEHA2G10890g"/>
<dbReference type="VEuPathDB" id="FungiDB:DEHA2G10890g"/>
<dbReference type="eggNOG" id="KOG3184">
    <property type="taxonomic scope" value="Eukaryota"/>
</dbReference>
<dbReference type="HOGENOM" id="CLU_055156_1_0_1"/>
<dbReference type="InParanoid" id="Q6BIF5"/>
<dbReference type="OMA" id="VNGWGPQ"/>
<dbReference type="OrthoDB" id="28644at2759"/>
<dbReference type="Proteomes" id="UP000000599">
    <property type="component" value="Chromosome G"/>
</dbReference>
<dbReference type="GO" id="GO:0022625">
    <property type="term" value="C:cytosolic large ribosomal subunit"/>
    <property type="evidence" value="ECO:0007669"/>
    <property type="project" value="TreeGrafter"/>
</dbReference>
<dbReference type="GO" id="GO:0005730">
    <property type="term" value="C:nucleolus"/>
    <property type="evidence" value="ECO:0007669"/>
    <property type="project" value="UniProtKB-SubCell"/>
</dbReference>
<dbReference type="GO" id="GO:0030687">
    <property type="term" value="C:preribosome, large subunit precursor"/>
    <property type="evidence" value="ECO:0007669"/>
    <property type="project" value="EnsemblFungi"/>
</dbReference>
<dbReference type="GO" id="GO:0042134">
    <property type="term" value="F:rRNA primary transcript binding"/>
    <property type="evidence" value="ECO:0007669"/>
    <property type="project" value="EnsemblFungi"/>
</dbReference>
<dbReference type="GO" id="GO:0003735">
    <property type="term" value="F:structural constituent of ribosome"/>
    <property type="evidence" value="ECO:0007669"/>
    <property type="project" value="TreeGrafter"/>
</dbReference>
<dbReference type="GO" id="GO:0000465">
    <property type="term" value="P:exonucleolytic trimming to generate mature 5'-end of 5.8S rRNA from tricistronic rRNA transcript (SSU-rRNA, 5.8S rRNA, LSU-rRNA)"/>
    <property type="evidence" value="ECO:0007669"/>
    <property type="project" value="EnsemblFungi"/>
</dbReference>
<dbReference type="GO" id="GO:0000463">
    <property type="term" value="P:maturation of LSU-rRNA from tricistronic rRNA transcript (SSU-rRNA, 5.8S rRNA, LSU-rRNA)"/>
    <property type="evidence" value="ECO:0007669"/>
    <property type="project" value="EnsemblFungi"/>
</dbReference>
<dbReference type="CDD" id="cd01657">
    <property type="entry name" value="Ribosomal_L7_archeal_euk"/>
    <property type="match status" value="1"/>
</dbReference>
<dbReference type="Gene3D" id="3.30.1390.20">
    <property type="entry name" value="Ribosomal protein L30, ferredoxin-like fold domain"/>
    <property type="match status" value="1"/>
</dbReference>
<dbReference type="InterPro" id="IPR036919">
    <property type="entry name" value="Ribo_uL30_ferredoxin-like_sf"/>
</dbReference>
<dbReference type="InterPro" id="IPR039699">
    <property type="entry name" value="Ribosomal_uL30"/>
</dbReference>
<dbReference type="InterPro" id="IPR018038">
    <property type="entry name" value="Ribosomal_uL30_CS"/>
</dbReference>
<dbReference type="InterPro" id="IPR035808">
    <property type="entry name" value="Ribosomal_uL30_euk_arc"/>
</dbReference>
<dbReference type="InterPro" id="IPR016082">
    <property type="entry name" value="Ribosomal_uL30_ferredoxin-like"/>
</dbReference>
<dbReference type="PANTHER" id="PTHR11524">
    <property type="entry name" value="60S RIBOSOMAL PROTEIN L7"/>
    <property type="match status" value="1"/>
</dbReference>
<dbReference type="PANTHER" id="PTHR11524:SF26">
    <property type="entry name" value="RIBOSOME BIOGENESIS PROTEIN RLP7"/>
    <property type="match status" value="1"/>
</dbReference>
<dbReference type="Pfam" id="PF00327">
    <property type="entry name" value="Ribosomal_L30"/>
    <property type="match status" value="1"/>
</dbReference>
<dbReference type="SUPFAM" id="SSF55129">
    <property type="entry name" value="Ribosomal protein L30p/L7e"/>
    <property type="match status" value="1"/>
</dbReference>
<dbReference type="PROSITE" id="PS00634">
    <property type="entry name" value="RIBOSOMAL_L30"/>
    <property type="match status" value="1"/>
</dbReference>
<sequence length="275" mass="31558">MAVLNSNPEILLRKRKNNDRKRLEKQEQARQRQLEQKKKNDQRSKKFVRAETLVSNYKSNELENKRIKHITKFEKQSQADKISQAKEDDESAKLLFIIRIPDHTKGLKVPSKARKVLHLLRLNRPNTGVFVKLTPATVPLLKLISPYIVAGKPSLNSIRKLFQKRACISVIDEETKEPRITKLDNNGVVEDKFGDDLGCICIEDLIHELATLGEHFKTVSNWILPFKLNAPVSGWGPQAKLAKLQYSNEHQRKISLAGDAKLNEIDIDQFIDEQN</sequence>